<accession>Q0AZF7</accession>
<name>NUSB_SYNWW</name>
<organism>
    <name type="scientific">Syntrophomonas wolfei subsp. wolfei (strain DSM 2245B / Goettingen)</name>
    <dbReference type="NCBI Taxonomy" id="335541"/>
    <lineage>
        <taxon>Bacteria</taxon>
        <taxon>Bacillati</taxon>
        <taxon>Bacillota</taxon>
        <taxon>Clostridia</taxon>
        <taxon>Eubacteriales</taxon>
        <taxon>Syntrophomonadaceae</taxon>
        <taxon>Syntrophomonas</taxon>
    </lineage>
</organism>
<protein>
    <recommendedName>
        <fullName evidence="1">Transcription antitermination protein NusB</fullName>
    </recommendedName>
    <alternativeName>
        <fullName evidence="1">Antitermination factor NusB</fullName>
    </alternativeName>
</protein>
<feature type="chain" id="PRO_0000265614" description="Transcription antitermination protein NusB">
    <location>
        <begin position="1"/>
        <end position="134"/>
    </location>
</feature>
<evidence type="ECO:0000255" key="1">
    <source>
        <dbReference type="HAMAP-Rule" id="MF_00073"/>
    </source>
</evidence>
<gene>
    <name evidence="1" type="primary">nusB</name>
    <name type="ordered locus">Swol_0564</name>
</gene>
<comment type="function">
    <text evidence="1">Involved in transcription antitermination. Required for transcription of ribosomal RNA (rRNA) genes. Binds specifically to the boxA antiterminator sequence of the ribosomal RNA (rrn) operons.</text>
</comment>
<comment type="similarity">
    <text evidence="1">Belongs to the NusB family.</text>
</comment>
<keyword id="KW-1185">Reference proteome</keyword>
<keyword id="KW-0694">RNA-binding</keyword>
<keyword id="KW-0804">Transcription</keyword>
<keyword id="KW-0889">Transcription antitermination</keyword>
<keyword id="KW-0805">Transcription regulation</keyword>
<reference key="1">
    <citation type="journal article" date="2010" name="Environ. Microbiol.">
        <title>The genome of Syntrophomonas wolfei: new insights into syntrophic metabolism and biohydrogen production.</title>
        <authorList>
            <person name="Sieber J.R."/>
            <person name="Sims D.R."/>
            <person name="Han C."/>
            <person name="Kim E."/>
            <person name="Lykidis A."/>
            <person name="Lapidus A.L."/>
            <person name="McDonnald E."/>
            <person name="Rohlin L."/>
            <person name="Culley D.E."/>
            <person name="Gunsalus R."/>
            <person name="McInerney M.J."/>
        </authorList>
    </citation>
    <scope>NUCLEOTIDE SEQUENCE [LARGE SCALE GENOMIC DNA]</scope>
    <source>
        <strain>DSM 2245B / Goettingen</strain>
    </source>
</reference>
<proteinExistence type="inferred from homology"/>
<sequence length="134" mass="15167">MSRRKARETAFKVVFQVDQVQADAKKAFDYLVLHDKLAEKNQGFSWDLIQGTLEKQAEIDQMIASYSREWALDRMSSVDRNIMRVAAYEILYLEDSQAVVAIDEAIEIAKKYGDEGSGSFVNAILDKILGEKNG</sequence>
<dbReference type="EMBL" id="CP000448">
    <property type="protein sequence ID" value="ABI67897.1"/>
    <property type="molecule type" value="Genomic_DNA"/>
</dbReference>
<dbReference type="RefSeq" id="WP_011640002.1">
    <property type="nucleotide sequence ID" value="NC_008346.1"/>
</dbReference>
<dbReference type="SMR" id="Q0AZF7"/>
<dbReference type="STRING" id="335541.Swol_0564"/>
<dbReference type="KEGG" id="swo:Swol_0564"/>
<dbReference type="eggNOG" id="COG0781">
    <property type="taxonomic scope" value="Bacteria"/>
</dbReference>
<dbReference type="HOGENOM" id="CLU_087843_3_3_9"/>
<dbReference type="OrthoDB" id="9811381at2"/>
<dbReference type="Proteomes" id="UP000001968">
    <property type="component" value="Chromosome"/>
</dbReference>
<dbReference type="GO" id="GO:0005829">
    <property type="term" value="C:cytosol"/>
    <property type="evidence" value="ECO:0007669"/>
    <property type="project" value="TreeGrafter"/>
</dbReference>
<dbReference type="GO" id="GO:0003723">
    <property type="term" value="F:RNA binding"/>
    <property type="evidence" value="ECO:0007669"/>
    <property type="project" value="UniProtKB-UniRule"/>
</dbReference>
<dbReference type="GO" id="GO:0006353">
    <property type="term" value="P:DNA-templated transcription termination"/>
    <property type="evidence" value="ECO:0007669"/>
    <property type="project" value="UniProtKB-UniRule"/>
</dbReference>
<dbReference type="GO" id="GO:0031564">
    <property type="term" value="P:transcription antitermination"/>
    <property type="evidence" value="ECO:0007669"/>
    <property type="project" value="UniProtKB-KW"/>
</dbReference>
<dbReference type="Gene3D" id="1.10.940.10">
    <property type="entry name" value="NusB-like"/>
    <property type="match status" value="1"/>
</dbReference>
<dbReference type="HAMAP" id="MF_00073">
    <property type="entry name" value="NusB"/>
    <property type="match status" value="1"/>
</dbReference>
<dbReference type="InterPro" id="IPR035926">
    <property type="entry name" value="NusB-like_sf"/>
</dbReference>
<dbReference type="InterPro" id="IPR011605">
    <property type="entry name" value="NusB_fam"/>
</dbReference>
<dbReference type="InterPro" id="IPR006027">
    <property type="entry name" value="NusB_RsmB_TIM44"/>
</dbReference>
<dbReference type="NCBIfam" id="TIGR01951">
    <property type="entry name" value="nusB"/>
    <property type="match status" value="1"/>
</dbReference>
<dbReference type="PANTHER" id="PTHR11078:SF3">
    <property type="entry name" value="ANTITERMINATION NUSB DOMAIN-CONTAINING PROTEIN"/>
    <property type="match status" value="1"/>
</dbReference>
<dbReference type="PANTHER" id="PTHR11078">
    <property type="entry name" value="N UTILIZATION SUBSTANCE PROTEIN B-RELATED"/>
    <property type="match status" value="1"/>
</dbReference>
<dbReference type="Pfam" id="PF01029">
    <property type="entry name" value="NusB"/>
    <property type="match status" value="1"/>
</dbReference>
<dbReference type="SUPFAM" id="SSF48013">
    <property type="entry name" value="NusB-like"/>
    <property type="match status" value="1"/>
</dbReference>